<feature type="chain" id="PRO_0000105424" description="Beta sliding clamp">
    <location>
        <begin position="1"/>
        <end position="378"/>
    </location>
</feature>
<feature type="strand" evidence="15">
    <location>
        <begin position="2"/>
        <end position="6"/>
    </location>
</feature>
<feature type="helix" evidence="15">
    <location>
        <begin position="7"/>
        <end position="18"/>
    </location>
</feature>
<feature type="helix" evidence="15">
    <location>
        <begin position="28"/>
        <end position="31"/>
    </location>
</feature>
<feature type="strand" evidence="15">
    <location>
        <begin position="32"/>
        <end position="37"/>
    </location>
</feature>
<feature type="strand" evidence="15">
    <location>
        <begin position="39"/>
        <end position="47"/>
    </location>
</feature>
<feature type="strand" evidence="15">
    <location>
        <begin position="49"/>
        <end position="61"/>
    </location>
</feature>
<feature type="strand" evidence="15">
    <location>
        <begin position="67"/>
        <end position="71"/>
    </location>
</feature>
<feature type="strand" evidence="15">
    <location>
        <begin position="73"/>
        <end position="78"/>
    </location>
</feature>
<feature type="helix" evidence="15">
    <location>
        <begin position="79"/>
        <end position="87"/>
    </location>
</feature>
<feature type="strand" evidence="15">
    <location>
        <begin position="90"/>
        <end position="98"/>
    </location>
</feature>
<feature type="helix" evidence="15">
    <location>
        <begin position="100"/>
        <end position="102"/>
    </location>
</feature>
<feature type="strand" evidence="15">
    <location>
        <begin position="103"/>
        <end position="108"/>
    </location>
</feature>
<feature type="strand" evidence="15">
    <location>
        <begin position="111"/>
        <end position="116"/>
    </location>
</feature>
<feature type="helix" evidence="15">
    <location>
        <begin position="120"/>
        <end position="122"/>
    </location>
</feature>
<feature type="strand" evidence="15">
    <location>
        <begin position="135"/>
        <end position="138"/>
    </location>
</feature>
<feature type="helix" evidence="15">
    <location>
        <begin position="139"/>
        <end position="147"/>
    </location>
</feature>
<feature type="helix" evidence="15">
    <location>
        <begin position="150"/>
        <end position="152"/>
    </location>
</feature>
<feature type="strand" evidence="16">
    <location>
        <begin position="157"/>
        <end position="159"/>
    </location>
</feature>
<feature type="helix" evidence="15">
    <location>
        <begin position="160"/>
        <end position="163"/>
    </location>
</feature>
<feature type="strand" evidence="15">
    <location>
        <begin position="164"/>
        <end position="170"/>
    </location>
</feature>
<feature type="strand" evidence="15">
    <location>
        <begin position="173"/>
        <end position="179"/>
    </location>
</feature>
<feature type="strand" evidence="15">
    <location>
        <begin position="181"/>
        <end position="190"/>
    </location>
</feature>
<feature type="strand" evidence="15">
    <location>
        <begin position="199"/>
        <end position="204"/>
    </location>
</feature>
<feature type="helix" evidence="15">
    <location>
        <begin position="205"/>
        <end position="214"/>
    </location>
</feature>
<feature type="strand" evidence="15">
    <location>
        <begin position="221"/>
        <end position="226"/>
    </location>
</feature>
<feature type="strand" evidence="15">
    <location>
        <begin position="228"/>
        <end position="235"/>
    </location>
</feature>
<feature type="strand" evidence="15">
    <location>
        <begin position="238"/>
        <end position="243"/>
    </location>
</feature>
<feature type="turn" evidence="15">
    <location>
        <begin position="253"/>
        <end position="255"/>
    </location>
</feature>
<feature type="strand" evidence="15">
    <location>
        <begin position="261"/>
        <end position="267"/>
    </location>
</feature>
<feature type="helix" evidence="15">
    <location>
        <begin position="268"/>
        <end position="278"/>
    </location>
</feature>
<feature type="turn" evidence="15">
    <location>
        <begin position="279"/>
        <end position="281"/>
    </location>
</feature>
<feature type="strand" evidence="15">
    <location>
        <begin position="290"/>
        <end position="295"/>
    </location>
</feature>
<feature type="turn" evidence="15">
    <location>
        <begin position="296"/>
        <end position="298"/>
    </location>
</feature>
<feature type="strand" evidence="15">
    <location>
        <begin position="299"/>
        <end position="306"/>
    </location>
</feature>
<feature type="turn" evidence="15">
    <location>
        <begin position="307"/>
        <end position="309"/>
    </location>
</feature>
<feature type="strand" evidence="15">
    <location>
        <begin position="310"/>
        <end position="317"/>
    </location>
</feature>
<feature type="strand" evidence="15">
    <location>
        <begin position="319"/>
        <end position="324"/>
    </location>
</feature>
<feature type="strand" evidence="15">
    <location>
        <begin position="326"/>
        <end position="330"/>
    </location>
</feature>
<feature type="helix" evidence="15">
    <location>
        <begin position="332"/>
        <end position="341"/>
    </location>
</feature>
<feature type="strand" evidence="15">
    <location>
        <begin position="344"/>
        <end position="352"/>
    </location>
</feature>
<feature type="turn" evidence="15">
    <location>
        <begin position="353"/>
        <end position="355"/>
    </location>
</feature>
<feature type="strand" evidence="15">
    <location>
        <begin position="358"/>
        <end position="361"/>
    </location>
</feature>
<feature type="strand" evidence="15">
    <location>
        <begin position="367"/>
        <end position="372"/>
    </location>
</feature>
<organism>
    <name type="scientific">Bacillus subtilis (strain 168)</name>
    <dbReference type="NCBI Taxonomy" id="224308"/>
    <lineage>
        <taxon>Bacteria</taxon>
        <taxon>Bacillati</taxon>
        <taxon>Bacillota</taxon>
        <taxon>Bacilli</taxon>
        <taxon>Bacillales</taxon>
        <taxon>Bacillaceae</taxon>
        <taxon>Bacillus</taxon>
    </lineage>
</organism>
<name>DPO3B_BACSU</name>
<dbReference type="EMBL" id="X02369">
    <property type="protein sequence ID" value="CAA26218.1"/>
    <property type="molecule type" value="Genomic_DNA"/>
</dbReference>
<dbReference type="EMBL" id="D26185">
    <property type="protein sequence ID" value="BAA05238.1"/>
    <property type="molecule type" value="Genomic_DNA"/>
</dbReference>
<dbReference type="EMBL" id="AL009126">
    <property type="protein sequence ID" value="CAB11778.1"/>
    <property type="molecule type" value="Genomic_DNA"/>
</dbReference>
<dbReference type="EMBL" id="X12779">
    <property type="protein sequence ID" value="CAA31271.1"/>
    <property type="molecule type" value="Genomic_DNA"/>
</dbReference>
<dbReference type="PIR" id="B22930">
    <property type="entry name" value="B22930"/>
</dbReference>
<dbReference type="RefSeq" id="NP_387883.1">
    <property type="nucleotide sequence ID" value="NC_000964.3"/>
</dbReference>
<dbReference type="RefSeq" id="WP_003242509.1">
    <property type="nucleotide sequence ID" value="NZ_OZ025638.1"/>
</dbReference>
<dbReference type="PDB" id="4TR6">
    <property type="method" value="X-ray"/>
    <property type="resolution" value="1.50 A"/>
    <property type="chains" value="A/B=1-378"/>
</dbReference>
<dbReference type="PDB" id="6E8D">
    <property type="method" value="X-ray"/>
    <property type="resolution" value="2.34 A"/>
    <property type="chains" value="A/B/C/D=1-378"/>
</dbReference>
<dbReference type="PDBsum" id="4TR6"/>
<dbReference type="PDBsum" id="6E8D"/>
<dbReference type="SMR" id="P05649"/>
<dbReference type="DIP" id="DIP-61105N"/>
<dbReference type="FunCoup" id="P05649">
    <property type="interactions" value="565"/>
</dbReference>
<dbReference type="IntAct" id="P05649">
    <property type="interactions" value="6"/>
</dbReference>
<dbReference type="MINT" id="P05649"/>
<dbReference type="STRING" id="224308.BSU00020"/>
<dbReference type="jPOST" id="P05649"/>
<dbReference type="PaxDb" id="224308-BSU00020"/>
<dbReference type="EnsemblBacteria" id="CAB11778">
    <property type="protein sequence ID" value="CAB11778"/>
    <property type="gene ID" value="BSU_00020"/>
</dbReference>
<dbReference type="GeneID" id="939970"/>
<dbReference type="KEGG" id="bsu:BSU00020"/>
<dbReference type="PATRIC" id="fig|224308.179.peg.2"/>
<dbReference type="eggNOG" id="COG0592">
    <property type="taxonomic scope" value="Bacteria"/>
</dbReference>
<dbReference type="InParanoid" id="P05649"/>
<dbReference type="OrthoDB" id="8421503at2"/>
<dbReference type="PhylomeDB" id="P05649"/>
<dbReference type="BioCyc" id="BSUB:BSU00020-MONOMER"/>
<dbReference type="EvolutionaryTrace" id="P05649"/>
<dbReference type="Proteomes" id="UP000001570">
    <property type="component" value="Chromosome"/>
</dbReference>
<dbReference type="GO" id="GO:0005737">
    <property type="term" value="C:cytoplasm"/>
    <property type="evidence" value="ECO:0007669"/>
    <property type="project" value="UniProtKB-KW"/>
</dbReference>
<dbReference type="GO" id="GO:0009360">
    <property type="term" value="C:DNA polymerase III complex"/>
    <property type="evidence" value="ECO:0007669"/>
    <property type="project" value="InterPro"/>
</dbReference>
<dbReference type="GO" id="GO:0009295">
    <property type="term" value="C:nucleoid"/>
    <property type="evidence" value="ECO:0007669"/>
    <property type="project" value="UniProtKB-SubCell"/>
</dbReference>
<dbReference type="GO" id="GO:0008408">
    <property type="term" value="F:3'-5' exonuclease activity"/>
    <property type="evidence" value="ECO:0007669"/>
    <property type="project" value="InterPro"/>
</dbReference>
<dbReference type="GO" id="GO:0003677">
    <property type="term" value="F:DNA binding"/>
    <property type="evidence" value="ECO:0007669"/>
    <property type="project" value="UniProtKB-KW"/>
</dbReference>
<dbReference type="GO" id="GO:0003887">
    <property type="term" value="F:DNA-directed DNA polymerase activity"/>
    <property type="evidence" value="ECO:0007669"/>
    <property type="project" value="UniProtKB-KW"/>
</dbReference>
<dbReference type="GO" id="GO:0006271">
    <property type="term" value="P:DNA strand elongation involved in DNA replication"/>
    <property type="evidence" value="ECO:0000318"/>
    <property type="project" value="GO_Central"/>
</dbReference>
<dbReference type="CDD" id="cd00140">
    <property type="entry name" value="beta_clamp"/>
    <property type="match status" value="1"/>
</dbReference>
<dbReference type="FunFam" id="3.10.150.10:FF:000007">
    <property type="entry name" value="Beta sliding clamp"/>
    <property type="match status" value="1"/>
</dbReference>
<dbReference type="Gene3D" id="3.70.10.10">
    <property type="match status" value="1"/>
</dbReference>
<dbReference type="Gene3D" id="3.10.150.10">
    <property type="entry name" value="DNA Polymerase III, subunit A, domain 2"/>
    <property type="match status" value="1"/>
</dbReference>
<dbReference type="InterPro" id="IPR046938">
    <property type="entry name" value="DNA_clamp_sf"/>
</dbReference>
<dbReference type="InterPro" id="IPR001001">
    <property type="entry name" value="DNA_polIII_beta"/>
</dbReference>
<dbReference type="InterPro" id="IPR022635">
    <property type="entry name" value="DNA_polIII_beta_C"/>
</dbReference>
<dbReference type="InterPro" id="IPR022637">
    <property type="entry name" value="DNA_polIII_beta_cen"/>
</dbReference>
<dbReference type="InterPro" id="IPR022634">
    <property type="entry name" value="DNA_polIII_beta_N"/>
</dbReference>
<dbReference type="NCBIfam" id="TIGR00663">
    <property type="entry name" value="dnan"/>
    <property type="match status" value="1"/>
</dbReference>
<dbReference type="PANTHER" id="PTHR30478:SF0">
    <property type="entry name" value="BETA SLIDING CLAMP"/>
    <property type="match status" value="1"/>
</dbReference>
<dbReference type="PANTHER" id="PTHR30478">
    <property type="entry name" value="DNA POLYMERASE III SUBUNIT BETA"/>
    <property type="match status" value="1"/>
</dbReference>
<dbReference type="Pfam" id="PF00712">
    <property type="entry name" value="DNA_pol3_beta"/>
    <property type="match status" value="1"/>
</dbReference>
<dbReference type="Pfam" id="PF02767">
    <property type="entry name" value="DNA_pol3_beta_2"/>
    <property type="match status" value="1"/>
</dbReference>
<dbReference type="Pfam" id="PF02768">
    <property type="entry name" value="DNA_pol3_beta_3"/>
    <property type="match status" value="1"/>
</dbReference>
<dbReference type="PIRSF" id="PIRSF000804">
    <property type="entry name" value="DNA_pol_III_b"/>
    <property type="match status" value="1"/>
</dbReference>
<dbReference type="SMART" id="SM00480">
    <property type="entry name" value="POL3Bc"/>
    <property type="match status" value="1"/>
</dbReference>
<dbReference type="SUPFAM" id="SSF55979">
    <property type="entry name" value="DNA clamp"/>
    <property type="match status" value="3"/>
</dbReference>
<comment type="function">
    <text evidence="1 5 7 13">Confers DNA tethering and processivity to DNA polymerases and other proteins. Acts as a clamp, forming a ring around DNA (a reaction catalyzed by the clamp-loading complex) which diffuses in an ATP-independent manner freely and bidirectionally along dsDNA. Initially characterized for its ability to contact the catalytic subunit of DNA polymerase III (Pol III), a complex, multichain enzyme responsible for most of the replicative synthesis in bacteria; Pol III exhibits 3'-5' exonuclease proofreading activity. The beta chain is required for initiation of replication as well as for processivity of DNA replication (By similarity). Overexpression in vivo stimulates inititation of DNA replication from oriC (PubMed:19737352). Increased levels of DnaN remove YabA from its association with DnaA on the chromosome, allowing DnaA to bind to its targets (PubMed:21895792). Its interaction with DnaA probably serves as a sink to prevent excessive replication initiation (Probable) (PubMed:28166228).</text>
</comment>
<comment type="subunit">
    <text evidence="1 3 4 8 9">Forms a ring-shaped head-to-tail homodimer (PubMed:25170813) around DNA which binds and tethers DNA polymerases and other proteins to the DNA. The DNA replisome complex has a single clamp-loading complex (3 tau and 1 each of delta, delta', psi and chi subunits) which binds 3 Pol III cores (1 core on the leading strand and 2 on the lagging strand) each with a beta sliding clamp dimer. Additional proteins in the replisome are other copies of gamma, psi and chi, Ssb, DNA helicase and RNA primase. Interacts with YabA, and via YabA, with DnaA (PubMed:12060778, PubMed:16461910). During sporulation probably interacts with SirA (PubMed:25041308).</text>
</comment>
<comment type="interaction">
    <interactant intactId="EBI-5244587">
        <id>P05649</id>
    </interactant>
    <interactant intactId="EBI-5243764">
        <id>P37542</id>
        <label>yabA</label>
    </interactant>
    <organismsDiffer>false</organismsDiffer>
    <experiments>4</experiments>
</comment>
<comment type="subcellular location">
    <subcellularLocation>
        <location evidence="5 6">Cytoplasm</location>
        <location evidence="5 6">Nucleoid</location>
    </subcellularLocation>
    <text evidence="5 6 8">Localizes in tight foci to the chromosomal replication center at mid-cell (PubMed:19737352, PubMed:21170359). When replication is blocked most foci are also lost (PubMed:19737352). Positioning does not rely on the C-terminus of SSB (ssbA) (PubMed:21170359). During sporulation colocalizes with SirA (PubMed:25041308).</text>
</comment>
<comment type="induction">
    <text evidence="2">Part of the dnaA-dnaN operon, which is negatively regulated by DnaA (PubMed:11395445). Transcription seems to often terminate between the 2 genes (PubMed:11395445).</text>
</comment>
<comment type="similarity">
    <text evidence="12">Belongs to the beta sliding clamp family.</text>
</comment>
<evidence type="ECO:0000250" key="1">
    <source>
        <dbReference type="UniProtKB" id="P0A988"/>
    </source>
</evidence>
<evidence type="ECO:0000269" key="2">
    <source>
    </source>
</evidence>
<evidence type="ECO:0000269" key="3">
    <source>
    </source>
</evidence>
<evidence type="ECO:0000269" key="4">
    <source>
    </source>
</evidence>
<evidence type="ECO:0000269" key="5">
    <source>
    </source>
</evidence>
<evidence type="ECO:0000269" key="6">
    <source>
    </source>
</evidence>
<evidence type="ECO:0000269" key="7">
    <source>
    </source>
</evidence>
<evidence type="ECO:0000269" key="8">
    <source>
    </source>
</evidence>
<evidence type="ECO:0000269" key="9">
    <source>
    </source>
</evidence>
<evidence type="ECO:0000303" key="10">
    <source>
    </source>
</evidence>
<evidence type="ECO:0000303" key="11">
    <source>
    </source>
</evidence>
<evidence type="ECO:0000305" key="12"/>
<evidence type="ECO:0000305" key="13">
    <source>
    </source>
</evidence>
<evidence type="ECO:0007744" key="14">
    <source>
        <dbReference type="PDB" id="4TR6"/>
    </source>
</evidence>
<evidence type="ECO:0007829" key="15">
    <source>
        <dbReference type="PDB" id="4TR6"/>
    </source>
</evidence>
<evidence type="ECO:0007829" key="16">
    <source>
        <dbReference type="PDB" id="6E8D"/>
    </source>
</evidence>
<proteinExistence type="evidence at protein level"/>
<accession>P05649</accession>
<accession>P11571</accession>
<protein>
    <recommendedName>
        <fullName>Beta sliding clamp</fullName>
        <shortName>Beta clamp</shortName>
        <shortName>Sliding clamp</shortName>
    </recommendedName>
    <alternativeName>
        <fullName>Beta-clamp processivity factor</fullName>
    </alternativeName>
    <alternativeName>
        <fullName>DNA polymerase III beta sliding clamp subunit</fullName>
    </alternativeName>
    <alternativeName>
        <fullName evidence="10">DNA polymerase III subunit beta</fullName>
    </alternativeName>
</protein>
<gene>
    <name evidence="11" type="primary">dnaN</name>
    <name type="synonym">dnaG</name>
    <name type="ordered locus">BSU00020</name>
</gene>
<reference key="1">
    <citation type="journal article" date="1985" name="Nucleic Acids Res.">
        <title>Structure and function of the region of the replication origin of the Bacillus subtilis chromosome. III. Nucleotide sequence of some 10,000 base pairs in the origin region.</title>
        <authorList>
            <person name="Moriya S."/>
            <person name="Ogasawara N."/>
            <person name="Yoshikawa H."/>
        </authorList>
    </citation>
    <scope>NUCLEOTIDE SEQUENCE [GENOMIC DNA]</scope>
</reference>
<reference key="2">
    <citation type="journal article" date="1994" name="DNA Res.">
        <title>Systematic sequencing of the 180 kilobase region of the Bacillus subtilis chromosome containing the replication origin.</title>
        <authorList>
            <person name="Ogasawara N."/>
            <person name="Nakai S."/>
            <person name="Yoshikawa H."/>
        </authorList>
    </citation>
    <scope>NUCLEOTIDE SEQUENCE [GENOMIC DNA]</scope>
    <source>
        <strain>168</strain>
    </source>
</reference>
<reference key="3">
    <citation type="journal article" date="1997" name="Nature">
        <title>The complete genome sequence of the Gram-positive bacterium Bacillus subtilis.</title>
        <authorList>
            <person name="Kunst F."/>
            <person name="Ogasawara N."/>
            <person name="Moszer I."/>
            <person name="Albertini A.M."/>
            <person name="Alloni G."/>
            <person name="Azevedo V."/>
            <person name="Bertero M.G."/>
            <person name="Bessieres P."/>
            <person name="Bolotin A."/>
            <person name="Borchert S."/>
            <person name="Borriss R."/>
            <person name="Boursier L."/>
            <person name="Brans A."/>
            <person name="Braun M."/>
            <person name="Brignell S.C."/>
            <person name="Bron S."/>
            <person name="Brouillet S."/>
            <person name="Bruschi C.V."/>
            <person name="Caldwell B."/>
            <person name="Capuano V."/>
            <person name="Carter N.M."/>
            <person name="Choi S.-K."/>
            <person name="Codani J.-J."/>
            <person name="Connerton I.F."/>
            <person name="Cummings N.J."/>
            <person name="Daniel R.A."/>
            <person name="Denizot F."/>
            <person name="Devine K.M."/>
            <person name="Duesterhoeft A."/>
            <person name="Ehrlich S.D."/>
            <person name="Emmerson P.T."/>
            <person name="Entian K.-D."/>
            <person name="Errington J."/>
            <person name="Fabret C."/>
            <person name="Ferrari E."/>
            <person name="Foulger D."/>
            <person name="Fritz C."/>
            <person name="Fujita M."/>
            <person name="Fujita Y."/>
            <person name="Fuma S."/>
            <person name="Galizzi A."/>
            <person name="Galleron N."/>
            <person name="Ghim S.-Y."/>
            <person name="Glaser P."/>
            <person name="Goffeau A."/>
            <person name="Golightly E.J."/>
            <person name="Grandi G."/>
            <person name="Guiseppi G."/>
            <person name="Guy B.J."/>
            <person name="Haga K."/>
            <person name="Haiech J."/>
            <person name="Harwood C.R."/>
            <person name="Henaut A."/>
            <person name="Hilbert H."/>
            <person name="Holsappel S."/>
            <person name="Hosono S."/>
            <person name="Hullo M.-F."/>
            <person name="Itaya M."/>
            <person name="Jones L.-M."/>
            <person name="Joris B."/>
            <person name="Karamata D."/>
            <person name="Kasahara Y."/>
            <person name="Klaerr-Blanchard M."/>
            <person name="Klein C."/>
            <person name="Kobayashi Y."/>
            <person name="Koetter P."/>
            <person name="Koningstein G."/>
            <person name="Krogh S."/>
            <person name="Kumano M."/>
            <person name="Kurita K."/>
            <person name="Lapidus A."/>
            <person name="Lardinois S."/>
            <person name="Lauber J."/>
            <person name="Lazarevic V."/>
            <person name="Lee S.-M."/>
            <person name="Levine A."/>
            <person name="Liu H."/>
            <person name="Masuda S."/>
            <person name="Mauel C."/>
            <person name="Medigue C."/>
            <person name="Medina N."/>
            <person name="Mellado R.P."/>
            <person name="Mizuno M."/>
            <person name="Moestl D."/>
            <person name="Nakai S."/>
            <person name="Noback M."/>
            <person name="Noone D."/>
            <person name="O'Reilly M."/>
            <person name="Ogawa K."/>
            <person name="Ogiwara A."/>
            <person name="Oudega B."/>
            <person name="Park S.-H."/>
            <person name="Parro V."/>
            <person name="Pohl T.M."/>
            <person name="Portetelle D."/>
            <person name="Porwollik S."/>
            <person name="Prescott A.M."/>
            <person name="Presecan E."/>
            <person name="Pujic P."/>
            <person name="Purnelle B."/>
            <person name="Rapoport G."/>
            <person name="Rey M."/>
            <person name="Reynolds S."/>
            <person name="Rieger M."/>
            <person name="Rivolta C."/>
            <person name="Rocha E."/>
            <person name="Roche B."/>
            <person name="Rose M."/>
            <person name="Sadaie Y."/>
            <person name="Sato T."/>
            <person name="Scanlan E."/>
            <person name="Schleich S."/>
            <person name="Schroeter R."/>
            <person name="Scoffone F."/>
            <person name="Sekiguchi J."/>
            <person name="Sekowska A."/>
            <person name="Seror S.J."/>
            <person name="Serror P."/>
            <person name="Shin B.-S."/>
            <person name="Soldo B."/>
            <person name="Sorokin A."/>
            <person name="Tacconi E."/>
            <person name="Takagi T."/>
            <person name="Takahashi H."/>
            <person name="Takemaru K."/>
            <person name="Takeuchi M."/>
            <person name="Tamakoshi A."/>
            <person name="Tanaka T."/>
            <person name="Terpstra P."/>
            <person name="Tognoni A."/>
            <person name="Tosato V."/>
            <person name="Uchiyama S."/>
            <person name="Vandenbol M."/>
            <person name="Vannier F."/>
            <person name="Vassarotti A."/>
            <person name="Viari A."/>
            <person name="Wambutt R."/>
            <person name="Wedler E."/>
            <person name="Wedler H."/>
            <person name="Weitzenegger T."/>
            <person name="Winters P."/>
            <person name="Wipat A."/>
            <person name="Yamamoto H."/>
            <person name="Yamane K."/>
            <person name="Yasumoto K."/>
            <person name="Yata K."/>
            <person name="Yoshida K."/>
            <person name="Yoshikawa H.-F."/>
            <person name="Zumstein E."/>
            <person name="Yoshikawa H."/>
            <person name="Danchin A."/>
        </authorList>
    </citation>
    <scope>NUCLEOTIDE SEQUENCE [LARGE SCALE GENOMIC DNA]</scope>
    <source>
        <strain>168</strain>
    </source>
</reference>
<reference key="4">
    <citation type="journal article" date="1988" name="EMBO J.">
        <title>Regulation of initiation of the chromosomal replication by DnaA-boxes in the origin region of the Bacillus subtilis chromosome.</title>
        <authorList>
            <person name="Moriya S."/>
            <person name="Fukuoka T."/>
            <person name="Ogasawara N."/>
            <person name="Yoshikawa H."/>
        </authorList>
    </citation>
    <scope>NUCLEOTIDE SEQUENCE [GENOMIC DNA] OF 1-29</scope>
    <source>
        <strain>168 / PSL1</strain>
    </source>
</reference>
<reference key="5">
    <citation type="journal article" date="2001" name="J. Bacteriol.">
        <title>Autoregulation of the dnaA-dnaN operon and effects of DnaA protein levels on replication initiation in Bacillus subtilis.</title>
        <authorList>
            <person name="Ogura Y."/>
            <person name="Imai Y."/>
            <person name="Ogasawara N."/>
            <person name="Moriya S."/>
        </authorList>
    </citation>
    <scope>INDUCTION</scope>
    <source>
        <strain>CRK6000</strain>
    </source>
</reference>
<reference key="6">
    <citation type="journal article" date="2002" name="Proc. Natl. Acad. Sci. U.S.A.">
        <title>An expanded view of bacterial DNA replication.</title>
        <authorList>
            <person name="Noirot-Gros M.-F."/>
            <person name="Dervyn E."/>
            <person name="Wu L.J."/>
            <person name="Mervelet P."/>
            <person name="Errington J."/>
            <person name="Ehrlich S.D."/>
            <person name="Noirot P."/>
        </authorList>
    </citation>
    <scope>INTERACTION WITH YABA</scope>
    <source>
        <strain>168</strain>
    </source>
</reference>
<reference key="7">
    <citation type="journal article" date="2006" name="Proc. Natl. Acad. Sci. U.S.A.">
        <title>Functional dissection of YabA, a negative regulator of DNA replication initiation in Bacillus subtilis.</title>
        <authorList>
            <person name="Noirot-Gros M.F."/>
            <person name="Velten M."/>
            <person name="Yoshimura M."/>
            <person name="McGovern S."/>
            <person name="Morimoto T."/>
            <person name="Ehrlich S.D."/>
            <person name="Ogasawara N."/>
            <person name="Polard P."/>
            <person name="Noirot P."/>
        </authorList>
    </citation>
    <scope>INTERACTION WITH YABA</scope>
</reference>
<reference key="8">
    <citation type="journal article" date="2009" name="Mol. Microbiol.">
        <title>YabA of Bacillus subtilis controls DnaA-mediated replication initiation but not the transcriptional response to replication stress.</title>
        <authorList>
            <person name="Goranov A.I."/>
            <person name="Breier A.M."/>
            <person name="Merrikh H."/>
            <person name="Grossman A.D."/>
        </authorList>
    </citation>
    <scope>FUNCTION</scope>
    <scope>SUBCELLULAR LOCATION</scope>
    <source>
        <strain>168 / JH642</strain>
    </source>
</reference>
<reference key="9">
    <citation type="journal article" date="2010" name="PLoS Genet.">
        <title>The C-terminal domain of the bacterial SSB protein acts as a DNA maintenance hub at active chromosome replication forks.</title>
        <authorList>
            <person name="Costes A."/>
            <person name="Lecointe F."/>
            <person name="McGovern S."/>
            <person name="Quevillon-Cheruel S."/>
            <person name="Polard P."/>
        </authorList>
    </citation>
    <scope>SUBCELLULAR LOCATION</scope>
    <source>
        <strain>168</strain>
    </source>
</reference>
<reference key="10">
    <citation type="journal article" date="2011" name="Mol. Microbiol.">
        <title>Control of the replication initiator DnaA by an anti-cooperativity factor.</title>
        <authorList>
            <person name="Merrikh H."/>
            <person name="Grossman A.D."/>
        </authorList>
    </citation>
    <scope>FUNCTION</scope>
</reference>
<reference key="11">
    <citation type="journal article" date="2014" name="Mol. Microbiol.">
        <title>Structure and interactions of the Bacillus subtilis sporulation inhibitor of DNA replication, SirA, with domain I of DnaA.</title>
        <authorList>
            <person name="Jameson K.H."/>
            <person name="Rostami N."/>
            <person name="Fogg M.J."/>
            <person name="Turkenburg J.P."/>
            <person name="Grahl A."/>
            <person name="Murray H."/>
            <person name="Wilkinson A.J."/>
        </authorList>
    </citation>
    <scope>SUBUNIT</scope>
    <scope>SUBCELLULAR LOCATION</scope>
</reference>
<reference key="12">
    <citation type="journal article" date="2017" name="PLoS Genet.">
        <title>Rapid turnover of DnaA at replication origin regions contributes to initiation control of DNA replication.</title>
        <authorList>
            <person name="Schenk K."/>
            <person name="Hervas A.B."/>
            <person name="Roesch T.C."/>
            <person name="Eisemann M."/>
            <person name="Schmitt B.A."/>
            <person name="Dahlke S."/>
            <person name="Kleine-Borgmann L."/>
            <person name="Murray S.M."/>
            <person name="Graumann P.L."/>
        </authorList>
    </citation>
    <scope>FUNCTION</scope>
</reference>
<reference evidence="14" key="13">
    <citation type="journal article" date="2014" name="J. Med. Chem.">
        <title>Differential modes of peptide binding onto replicative sliding clamps from various bacterial origins.</title>
        <authorList>
            <person name="Wolff P."/>
            <person name="Amal I."/>
            <person name="Olieric V."/>
            <person name="Chaloin O."/>
            <person name="Gygli G."/>
            <person name="Ennifar E."/>
            <person name="Lorber B."/>
            <person name="Guichard G."/>
            <person name="Wagner J."/>
            <person name="Dejaegere A."/>
            <person name="Burnouf D.Y."/>
        </authorList>
    </citation>
    <scope>X-RAY CRYSTALLOGRAPHY (1.50 ANGSTROMS)</scope>
    <scope>SUBUNIT</scope>
</reference>
<sequence>MKFTIQKDRLVESVQDVLKAVSSRTTIPILTGIKIVASDDGVSFTGSDSDISIESFIPKEEGDKEIVTIEQPGSIVLQARFFSEIVKKLPMATVEIEVQNQYLTIIRSGKAEFNLNGLDADEYPHLPQIEEHHAIQIPTDLLKNLIRQTVFAVSTSETRPILTGVNWKVEQSELLCTATDSHRLALRKAKLDIPEDRSYNVVIPGKSLTELSKILDDNQELVDIVITETQVLFKAKNVLFFSRLLDGNYPDTTSLIPQDSKTEIIVNTKEFLQAIDRASLLAREGRNNVVKLSAKPAESIEISSNSPEIGKVVEAIVADQIEGEELNISFSPKYMLDALKVLEGAEIRVSFTGAMRPFLIRTPNDETIVQLILPVRTY</sequence>
<keyword id="KW-0002">3D-structure</keyword>
<keyword id="KW-0963">Cytoplasm</keyword>
<keyword id="KW-0235">DNA replication</keyword>
<keyword id="KW-0238">DNA-binding</keyword>
<keyword id="KW-0239">DNA-directed DNA polymerase</keyword>
<keyword id="KW-0548">Nucleotidyltransferase</keyword>
<keyword id="KW-1185">Reference proteome</keyword>
<keyword id="KW-0808">Transferase</keyword>